<name>VPS41_ARATH</name>
<feature type="chain" id="PRO_0000212825" description="Vacuolar protein sorting-associated protein 41 homolog">
    <location>
        <begin position="1"/>
        <end position="980"/>
    </location>
</feature>
<feature type="repeat" description="WD 1">
    <location>
        <begin position="57"/>
        <end position="95"/>
    </location>
</feature>
<feature type="repeat" description="WD 2">
    <location>
        <begin position="96"/>
        <end position="135"/>
    </location>
</feature>
<feature type="repeat" description="WD 3">
    <location>
        <begin position="185"/>
        <end position="221"/>
    </location>
</feature>
<feature type="repeat" description="CHCR">
    <location>
        <begin position="613"/>
        <end position="769"/>
    </location>
</feature>
<feature type="region of interest" description="Disordered" evidence="2">
    <location>
        <begin position="1"/>
        <end position="42"/>
    </location>
</feature>
<feature type="region of interest" description="Disordered" evidence="2">
    <location>
        <begin position="931"/>
        <end position="964"/>
    </location>
</feature>
<feature type="compositionally biased region" description="Acidic residues" evidence="2">
    <location>
        <begin position="10"/>
        <end position="40"/>
    </location>
</feature>
<feature type="compositionally biased region" description="Acidic residues" evidence="2">
    <location>
        <begin position="942"/>
        <end position="957"/>
    </location>
</feature>
<feature type="sequence conflict" description="In Ref. 3; AAB60858." evidence="4" ref="3">
    <original>R</original>
    <variation>G</variation>
    <location>
        <position position="648"/>
    </location>
</feature>
<feature type="sequence conflict" description="In Ref. 3; AAB60858." evidence="4" ref="3">
    <original>E</original>
    <variation>EE</variation>
    <location>
        <position position="948"/>
    </location>
</feature>
<organism>
    <name type="scientific">Arabidopsis thaliana</name>
    <name type="common">Mouse-ear cress</name>
    <dbReference type="NCBI Taxonomy" id="3702"/>
    <lineage>
        <taxon>Eukaryota</taxon>
        <taxon>Viridiplantae</taxon>
        <taxon>Streptophyta</taxon>
        <taxon>Embryophyta</taxon>
        <taxon>Tracheophyta</taxon>
        <taxon>Spermatophyta</taxon>
        <taxon>Magnoliopsida</taxon>
        <taxon>eudicotyledons</taxon>
        <taxon>Gunneridae</taxon>
        <taxon>Pentapetalae</taxon>
        <taxon>rosids</taxon>
        <taxon>malvids</taxon>
        <taxon>Brassicales</taxon>
        <taxon>Brassicaceae</taxon>
        <taxon>Camelineae</taxon>
        <taxon>Arabidopsis</taxon>
    </lineage>
</organism>
<proteinExistence type="evidence at protein level"/>
<keyword id="KW-0653">Protein transport</keyword>
<keyword id="KW-1185">Reference proteome</keyword>
<keyword id="KW-0677">Repeat</keyword>
<keyword id="KW-0813">Transport</keyword>
<keyword id="KW-0853">WD repeat</keyword>
<protein>
    <recommendedName>
        <fullName>Vacuolar protein sorting-associated protein 41 homolog</fullName>
    </recommendedName>
</protein>
<reference key="1">
    <citation type="journal article" date="2000" name="Nature">
        <title>Sequence and analysis of chromosome 1 of the plant Arabidopsis thaliana.</title>
        <authorList>
            <person name="Theologis A."/>
            <person name="Ecker J.R."/>
            <person name="Palm C.J."/>
            <person name="Federspiel N.A."/>
            <person name="Kaul S."/>
            <person name="White O."/>
            <person name="Alonso J."/>
            <person name="Altafi H."/>
            <person name="Araujo R."/>
            <person name="Bowman C.L."/>
            <person name="Brooks S.Y."/>
            <person name="Buehler E."/>
            <person name="Chan A."/>
            <person name="Chao Q."/>
            <person name="Chen H."/>
            <person name="Cheuk R.F."/>
            <person name="Chin C.W."/>
            <person name="Chung M.K."/>
            <person name="Conn L."/>
            <person name="Conway A.B."/>
            <person name="Conway A.R."/>
            <person name="Creasy T.H."/>
            <person name="Dewar K."/>
            <person name="Dunn P."/>
            <person name="Etgu P."/>
            <person name="Feldblyum T.V."/>
            <person name="Feng J.-D."/>
            <person name="Fong B."/>
            <person name="Fujii C.Y."/>
            <person name="Gill J.E."/>
            <person name="Goldsmith A.D."/>
            <person name="Haas B."/>
            <person name="Hansen N.F."/>
            <person name="Hughes B."/>
            <person name="Huizar L."/>
            <person name="Hunter J.L."/>
            <person name="Jenkins J."/>
            <person name="Johnson-Hopson C."/>
            <person name="Khan S."/>
            <person name="Khaykin E."/>
            <person name="Kim C.J."/>
            <person name="Koo H.L."/>
            <person name="Kremenetskaia I."/>
            <person name="Kurtz D.B."/>
            <person name="Kwan A."/>
            <person name="Lam B."/>
            <person name="Langin-Hooper S."/>
            <person name="Lee A."/>
            <person name="Lee J.M."/>
            <person name="Lenz C.A."/>
            <person name="Li J.H."/>
            <person name="Li Y.-P."/>
            <person name="Lin X."/>
            <person name="Liu S.X."/>
            <person name="Liu Z.A."/>
            <person name="Luros J.S."/>
            <person name="Maiti R."/>
            <person name="Marziali A."/>
            <person name="Militscher J."/>
            <person name="Miranda M."/>
            <person name="Nguyen M."/>
            <person name="Nierman W.C."/>
            <person name="Osborne B.I."/>
            <person name="Pai G."/>
            <person name="Peterson J."/>
            <person name="Pham P.K."/>
            <person name="Rizzo M."/>
            <person name="Rooney T."/>
            <person name="Rowley D."/>
            <person name="Sakano H."/>
            <person name="Salzberg S.L."/>
            <person name="Schwartz J.R."/>
            <person name="Shinn P."/>
            <person name="Southwick A.M."/>
            <person name="Sun H."/>
            <person name="Tallon L.J."/>
            <person name="Tambunga G."/>
            <person name="Toriumi M.J."/>
            <person name="Town C.D."/>
            <person name="Utterback T."/>
            <person name="Van Aken S."/>
            <person name="Vaysberg M."/>
            <person name="Vysotskaia V.S."/>
            <person name="Walker M."/>
            <person name="Wu D."/>
            <person name="Yu G."/>
            <person name="Fraser C.M."/>
            <person name="Venter J.C."/>
            <person name="Davis R.W."/>
        </authorList>
    </citation>
    <scope>NUCLEOTIDE SEQUENCE [LARGE SCALE GENOMIC DNA]</scope>
    <source>
        <strain>cv. Columbia</strain>
    </source>
</reference>
<reference key="2">
    <citation type="journal article" date="2017" name="Plant J.">
        <title>Araport11: a complete reannotation of the Arabidopsis thaliana reference genome.</title>
        <authorList>
            <person name="Cheng C.Y."/>
            <person name="Krishnakumar V."/>
            <person name="Chan A.P."/>
            <person name="Thibaud-Nissen F."/>
            <person name="Schobel S."/>
            <person name="Town C.D."/>
        </authorList>
    </citation>
    <scope>GENOME REANNOTATION</scope>
    <source>
        <strain>cv. Columbia</strain>
    </source>
</reference>
<reference key="3">
    <citation type="journal article" date="1997" name="Proc. Natl. Acad. Sci. U.S.A.">
        <title>Characterization of VPS41, a gene required for vacuolar trafficking and high-affinity iron transport in yeast.</title>
        <authorList>
            <person name="Radisky D.C."/>
            <person name="Snyder W.B."/>
            <person name="Emr S.D."/>
            <person name="Kaplan J."/>
        </authorList>
    </citation>
    <scope>NUCLEOTIDE SEQUENCE [GENOMIC DNA] OF 648-980</scope>
</reference>
<reference key="4">
    <citation type="journal article" date="2018" name="Proc. Natl. Acad. Sci. U.S.A.">
        <title>Distinct sets of tethering complexes, SNARE complexes, and Rab GTPases mediate membrane fusion at the vacuole in Arabidopsis.</title>
        <authorList>
            <person name="Takemoto K."/>
            <person name="Ebine K."/>
            <person name="Askani J.C."/>
            <person name="Krueger F."/>
            <person name="Gonzalez Z.A."/>
            <person name="Ito E."/>
            <person name="Goh T."/>
            <person name="Schumacher K."/>
            <person name="Nakano A."/>
            <person name="Ueda T."/>
        </authorList>
    </citation>
    <scope>SUBUNIT</scope>
    <scope>IDENTIFICATION BY MASS SPECTROMETRY</scope>
</reference>
<gene>
    <name type="primary">VPS41</name>
    <name type="ordered locus">At1g08190</name>
    <name type="ORF">T23G18.5</name>
</gene>
<sequence>MAAVPPENGVDGDDEREEEEEDEEEEEEEEEEENGDEAEEEPRLKYQRMGGNVPALLSNDAASCIAVAARMIALGTHDGTVRILDLLGNQVKEFRAHTAPVNDINFDTEGEYIGSCSDDGSVVINSLFTDDEKMKFDYHRPMKAISLDPDYTKKQSKRFVAGGLAGHLYMNSKKWFGNKDQVLHSGEGPIHSVKWRGSLIAWANDVGVKVYDTAKDQRVTFIEKPRGSPRPEALLPHLVWQDDTLLVIGWGTSVKIASIKSDQQQTGTFRQIQMSSLTQVDIVASFQTSYYISGIAPFGDSLVILAYIPIEGDGEKEFSSTTTLSRQGNAQRPEIRIVSWNNDELTMDALPVHGFEHYKAKDYSLAHAPFPGSSYAGGQWAAGDEPLYYIVSPKDVVIAKPRDAEDHINWLLQHGFHEKALAAVEASEGRTELIDKVGAGYLDHLIVERKYAEAASLCPKLLRGSASAWERWVFHFAQLRQLPVLVPYMPTDNPRLKDTVYEVALVALATNPSYHKELLSAVKSWPRSVYSALTVISAIEPQLNTSSMTDALKEALAELYVIDGQYQKAFSLYADLLKPEVFDFIEKYSLHEAIRGKVVQLMLLDCKRATVLFIQNRDLIPPSEVVPQLLKAGKNPQVLKAGKKCDSRYYLYLYLHALFEVSHDTGKDFHDMQVELYAEYDTKMLLPFLRSSQHYKLEKAYELCVKKDFLREQVFVLGRMGNAKQALAVIINKLGDIEEAVEFVSMQHDDDLWEELIKQCLNKPEMVGLLLEHTVGNLDPLYIVNMVPNGLEIPRLRDRLVKIVTDYRTETSLRHGCNDILKTDIVNLLVKCFNEARRGVCLSHEDDDSRAKREDNNRSSFSQRMVVDKSLSIKMTEVKSKTRGDTRCCMCFDPVSIRGDTVVVFFCCHAYHETCLMDAAFSNNNHKTTKGSSGYEYSYDNGVDEEEEDEEEDEDGDGDRPGRSRLRCILCTTAAAASAR</sequence>
<accession>P93043</accession>
<accession>Q9SGE1</accession>
<comment type="function">
    <text evidence="1">Required for vacuolar assembly and vacuolar traffic.</text>
</comment>
<comment type="subunit">
    <text evidence="3">Component of the homotypic fusion and vacuole protein sorting (HOPS) complex composed of the class C Vps core proteins VPS11, VCL1, VPS18 and VPS33, which in HOPS further associates with VPS39 and VPS41.</text>
</comment>
<comment type="similarity">
    <text evidence="4">Belongs to the VPS41 family.</text>
</comment>
<comment type="sequence caution" evidence="4">
    <conflict type="erroneous gene model prediction">
        <sequence resource="EMBL-CDS" id="AAF18239"/>
    </conflict>
</comment>
<evidence type="ECO:0000250" key="1"/>
<evidence type="ECO:0000256" key="2">
    <source>
        <dbReference type="SAM" id="MobiDB-lite"/>
    </source>
</evidence>
<evidence type="ECO:0000269" key="3">
    <source>
    </source>
</evidence>
<evidence type="ECO:0000305" key="4"/>
<dbReference type="EMBL" id="AC011438">
    <property type="protein sequence ID" value="AAF18239.1"/>
    <property type="status" value="ALT_SEQ"/>
    <property type="molecule type" value="Genomic_DNA"/>
</dbReference>
<dbReference type="EMBL" id="CP002684">
    <property type="protein sequence ID" value="AEE28259.1"/>
    <property type="molecule type" value="Genomic_DNA"/>
</dbReference>
<dbReference type="EMBL" id="U86663">
    <property type="protein sequence ID" value="AAB60858.1"/>
    <property type="molecule type" value="Genomic_DNA"/>
</dbReference>
<dbReference type="RefSeq" id="NP_172297.2">
    <property type="nucleotide sequence ID" value="NM_100693.4"/>
</dbReference>
<dbReference type="SMR" id="P93043"/>
<dbReference type="FunCoup" id="P93043">
    <property type="interactions" value="4112"/>
</dbReference>
<dbReference type="STRING" id="3702.P93043"/>
<dbReference type="iPTMnet" id="P93043"/>
<dbReference type="PaxDb" id="3702-AT1G08190.1"/>
<dbReference type="ProteomicsDB" id="242748"/>
<dbReference type="EnsemblPlants" id="AT1G08190.1">
    <property type="protein sequence ID" value="AT1G08190.1"/>
    <property type="gene ID" value="AT1G08190"/>
</dbReference>
<dbReference type="GeneID" id="837340"/>
<dbReference type="Gramene" id="AT1G08190.1">
    <property type="protein sequence ID" value="AT1G08190.1"/>
    <property type="gene ID" value="AT1G08190"/>
</dbReference>
<dbReference type="KEGG" id="ath:AT1G08190"/>
<dbReference type="Araport" id="AT1G08190"/>
<dbReference type="TAIR" id="AT1G08190">
    <property type="gene designation" value="VPS41"/>
</dbReference>
<dbReference type="eggNOG" id="KOG2066">
    <property type="taxonomic scope" value="Eukaryota"/>
</dbReference>
<dbReference type="HOGENOM" id="CLU_001285_2_2_1"/>
<dbReference type="InParanoid" id="P93043"/>
<dbReference type="OMA" id="PQLVWQD"/>
<dbReference type="PhylomeDB" id="P93043"/>
<dbReference type="PRO" id="PR:P93043"/>
<dbReference type="Proteomes" id="UP000006548">
    <property type="component" value="Chromosome 1"/>
</dbReference>
<dbReference type="ExpressionAtlas" id="P93043">
    <property type="expression patterns" value="baseline and differential"/>
</dbReference>
<dbReference type="GO" id="GO:0005576">
    <property type="term" value="C:extracellular region"/>
    <property type="evidence" value="ECO:0007005"/>
    <property type="project" value="TAIR"/>
</dbReference>
<dbReference type="GO" id="GO:0030897">
    <property type="term" value="C:HOPS complex"/>
    <property type="evidence" value="ECO:0000314"/>
    <property type="project" value="UniProtKB"/>
</dbReference>
<dbReference type="GO" id="GO:0034058">
    <property type="term" value="P:endosomal vesicle fusion"/>
    <property type="evidence" value="ECO:0007669"/>
    <property type="project" value="InterPro"/>
</dbReference>
<dbReference type="GO" id="GO:0009630">
    <property type="term" value="P:gravitropism"/>
    <property type="evidence" value="ECO:0000315"/>
    <property type="project" value="TAIR"/>
</dbReference>
<dbReference type="GO" id="GO:0006623">
    <property type="term" value="P:protein targeting to vacuole"/>
    <property type="evidence" value="ECO:0000304"/>
    <property type="project" value="TAIR"/>
</dbReference>
<dbReference type="CDD" id="cd16687">
    <property type="entry name" value="RING-H2_Vps8"/>
    <property type="match status" value="1"/>
</dbReference>
<dbReference type="FunFam" id="1.25.40.10:FF:000545">
    <property type="entry name" value="Vacuolar protein sorting-associated protein 41 homolog"/>
    <property type="match status" value="1"/>
</dbReference>
<dbReference type="FunFam" id="2.130.10.10:FF:000554">
    <property type="entry name" value="Vacuolar protein sorting-associated protein 41 homolog"/>
    <property type="match status" value="1"/>
</dbReference>
<dbReference type="Gene3D" id="1.25.40.10">
    <property type="entry name" value="Tetratricopeptide repeat domain"/>
    <property type="match status" value="1"/>
</dbReference>
<dbReference type="Gene3D" id="2.130.10.10">
    <property type="entry name" value="YVTN repeat-like/Quinoprotein amine dehydrogenase"/>
    <property type="match status" value="1"/>
</dbReference>
<dbReference type="InterPro" id="IPR000547">
    <property type="entry name" value="Clathrin_H-chain/VPS_repeat"/>
</dbReference>
<dbReference type="InterPro" id="IPR011990">
    <property type="entry name" value="TPR-like_helical_dom_sf"/>
</dbReference>
<dbReference type="InterPro" id="IPR016902">
    <property type="entry name" value="VPS41"/>
</dbReference>
<dbReference type="InterPro" id="IPR045111">
    <property type="entry name" value="Vps41/Vps8"/>
</dbReference>
<dbReference type="InterPro" id="IPR015943">
    <property type="entry name" value="WD40/YVTN_repeat-like_dom_sf"/>
</dbReference>
<dbReference type="InterPro" id="IPR036322">
    <property type="entry name" value="WD40_repeat_dom_sf"/>
</dbReference>
<dbReference type="InterPro" id="IPR001680">
    <property type="entry name" value="WD40_rpt"/>
</dbReference>
<dbReference type="PANTHER" id="PTHR12616">
    <property type="entry name" value="VACUOLAR PROTEIN SORTING VPS41"/>
    <property type="match status" value="1"/>
</dbReference>
<dbReference type="PANTHER" id="PTHR12616:SF1">
    <property type="entry name" value="VACUOLAR PROTEIN SORTING-ASSOCIATED PROTEIN 41 HOMOLOG"/>
    <property type="match status" value="1"/>
</dbReference>
<dbReference type="Pfam" id="PF23411">
    <property type="entry name" value="Beta-prop_Vps41"/>
    <property type="match status" value="1"/>
</dbReference>
<dbReference type="Pfam" id="PF23556">
    <property type="entry name" value="TPR_Vps41"/>
    <property type="match status" value="1"/>
</dbReference>
<dbReference type="Pfam" id="PF23555">
    <property type="entry name" value="zf-RING_Vps41"/>
    <property type="match status" value="1"/>
</dbReference>
<dbReference type="PIRSF" id="PIRSF028921">
    <property type="entry name" value="VPS41"/>
    <property type="match status" value="1"/>
</dbReference>
<dbReference type="SMART" id="SM00299">
    <property type="entry name" value="CLH"/>
    <property type="match status" value="1"/>
</dbReference>
<dbReference type="SMART" id="SM00320">
    <property type="entry name" value="WD40"/>
    <property type="match status" value="2"/>
</dbReference>
<dbReference type="SUPFAM" id="SSF57850">
    <property type="entry name" value="RING/U-box"/>
    <property type="match status" value="1"/>
</dbReference>
<dbReference type="SUPFAM" id="SSF50978">
    <property type="entry name" value="WD40 repeat-like"/>
    <property type="match status" value="1"/>
</dbReference>
<dbReference type="PROSITE" id="PS50236">
    <property type="entry name" value="CHCR"/>
    <property type="match status" value="1"/>
</dbReference>
<dbReference type="PROSITE" id="PS50082">
    <property type="entry name" value="WD_REPEATS_2"/>
    <property type="match status" value="1"/>
</dbReference>